<protein>
    <recommendedName>
        <fullName evidence="11">Decarboxylase gedI</fullName>
        <ecNumber evidence="12">4.1.1.-</ecNumber>
    </recommendedName>
    <alternativeName>
        <fullName evidence="10">Geodin synthesis protein I</fullName>
    </alternativeName>
</protein>
<reference key="1">
    <citation type="submission" date="2005-09" db="EMBL/GenBank/DDBJ databases">
        <title>Annotation of the Aspergillus terreus NIH2624 genome.</title>
        <authorList>
            <person name="Birren B.W."/>
            <person name="Lander E.S."/>
            <person name="Galagan J.E."/>
            <person name="Nusbaum C."/>
            <person name="Devon K."/>
            <person name="Henn M."/>
            <person name="Ma L.-J."/>
            <person name="Jaffe D.B."/>
            <person name="Butler J."/>
            <person name="Alvarez P."/>
            <person name="Gnerre S."/>
            <person name="Grabherr M."/>
            <person name="Kleber M."/>
            <person name="Mauceli E.W."/>
            <person name="Brockman W."/>
            <person name="Rounsley S."/>
            <person name="Young S.K."/>
            <person name="LaButti K."/>
            <person name="Pushparaj V."/>
            <person name="DeCaprio D."/>
            <person name="Crawford M."/>
            <person name="Koehrsen M."/>
            <person name="Engels R."/>
            <person name="Montgomery P."/>
            <person name="Pearson M."/>
            <person name="Howarth C."/>
            <person name="Larson L."/>
            <person name="Luoma S."/>
            <person name="White J."/>
            <person name="Alvarado L."/>
            <person name="Kodira C.D."/>
            <person name="Zeng Q."/>
            <person name="Oleary S."/>
            <person name="Yandava C."/>
            <person name="Denning D.W."/>
            <person name="Nierman W.C."/>
            <person name="Milne T."/>
            <person name="Madden K."/>
        </authorList>
    </citation>
    <scope>NUCLEOTIDE SEQUENCE [LARGE SCALE GENOMIC DNA]</scope>
    <source>
        <strain>NIH 2624 / FGSC A1156</strain>
    </source>
</reference>
<reference key="2">
    <citation type="journal article" date="1988" name="J. Biochem.">
        <title>A novel anthraquinone ring cleavage enzyme from Aspergillus terreus.</title>
        <authorList>
            <person name="Fujii I."/>
            <person name="Ebizuka Y."/>
            <person name="Sankawa U."/>
        </authorList>
    </citation>
    <scope>FUNCTION</scope>
</reference>
<reference key="3">
    <citation type="journal article" date="1991" name="Biochem. Int.">
        <title>Identification of emodinanthrone oxygenase in fungus Aspergillus terreus.</title>
        <authorList>
            <person name="Fujii I."/>
            <person name="Chen Z.G."/>
            <person name="Ebizuka Y."/>
            <person name="Sankawa U."/>
        </authorList>
    </citation>
    <scope>FUNCTION</scope>
</reference>
<reference key="4">
    <citation type="journal article" date="1992" name="Arch. Microbiol.">
        <title>Emodin O-methyltransferase from Aspergillus terreus.</title>
        <authorList>
            <person name="Chen Z.G."/>
            <person name="Fujii I."/>
            <person name="Ebizuka Y."/>
            <person name="Sankawa U."/>
        </authorList>
    </citation>
    <scope>FUNCTION</scope>
</reference>
<reference key="5">
    <citation type="journal article" date="1995" name="J. Biol. Chem.">
        <title>Molecular cloning and heterologous expression of the gene encoding dihydrogeodin oxidase, a multicopper blue enzyme from Aspergillus terreus.</title>
        <authorList>
            <person name="Huang K.X."/>
            <person name="Fujii I."/>
            <person name="Ebizuka Y."/>
            <person name="Gomi K."/>
            <person name="Sankawa U."/>
        </authorList>
    </citation>
    <scope>FUNCTION</scope>
</reference>
<reference key="6">
    <citation type="journal article" date="2003" name="Nat. Biotechnol.">
        <title>Integrating transcriptional and metabolite profiles to direct the engineering of lovastatin-producing fungal strains.</title>
        <authorList>
            <person name="Askenazi M."/>
            <person name="Driggers E.M."/>
            <person name="Holtzman D.A."/>
            <person name="Norman T.C."/>
            <person name="Iverson S."/>
            <person name="Zimmer D.P."/>
            <person name="Boers M.E."/>
            <person name="Blomquist P.R."/>
            <person name="Martinez E.J."/>
            <person name="Monreal A.W."/>
            <person name="Feibelman T.P."/>
            <person name="Mayorga M.E."/>
            <person name="Maxon M.E."/>
            <person name="Sykes K."/>
            <person name="Tobin J.V."/>
            <person name="Cordero E."/>
            <person name="Salama S.R."/>
            <person name="Trueheart J."/>
            <person name="Royer J.C."/>
            <person name="Madden K.T."/>
        </authorList>
    </citation>
    <scope>FUNCTION</scope>
</reference>
<reference key="7">
    <citation type="journal article" date="2009" name="Chem. Biol.">
        <title>Physically discrete beta-lactamase-type thioesterase catalyzes product release in atrochrysone synthesis by iterative type I polyketide synthase.</title>
        <authorList>
            <person name="Awakawa T."/>
            <person name="Yokota K."/>
            <person name="Funa N."/>
            <person name="Doi F."/>
            <person name="Mori N."/>
            <person name="Watanabe H."/>
            <person name="Horinouchi S."/>
        </authorList>
    </citation>
    <scope>FUNCTION</scope>
</reference>
<reference key="8">
    <citation type="journal article" date="2013" name="PLoS ONE">
        <title>Heterologous reconstitution of the intact geodin gene cluster in Aspergillus nidulans through a simple and versatile PCR based approach.</title>
        <authorList>
            <person name="Nielsen M.T."/>
            <person name="Nielsen J.B."/>
            <person name="Anyaogu D.C."/>
            <person name="Holm D.K."/>
            <person name="Nielsen K.F."/>
            <person name="Larsen T.O."/>
            <person name="Mortensen U.H."/>
        </authorList>
    </citation>
    <scope>GENE MODEL REVISION</scope>
    <scope>FUNCTION</scope>
</reference>
<evidence type="ECO:0000255" key="1"/>
<evidence type="ECO:0000256" key="2">
    <source>
        <dbReference type="SAM" id="MobiDB-lite"/>
    </source>
</evidence>
<evidence type="ECO:0000269" key="3">
    <source>
    </source>
</evidence>
<evidence type="ECO:0000269" key="4">
    <source>
    </source>
</evidence>
<evidence type="ECO:0000269" key="5">
    <source>
    </source>
</evidence>
<evidence type="ECO:0000269" key="6">
    <source>
    </source>
</evidence>
<evidence type="ECO:0000269" key="7">
    <source>
    </source>
</evidence>
<evidence type="ECO:0000269" key="8">
    <source>
    </source>
</evidence>
<evidence type="ECO:0000269" key="9">
    <source>
    </source>
</evidence>
<evidence type="ECO:0000303" key="10">
    <source>
    </source>
</evidence>
<evidence type="ECO:0000305" key="11"/>
<evidence type="ECO:0000305" key="12">
    <source>
    </source>
</evidence>
<name>GEDI_ASPTN</name>
<keyword id="KW-0456">Lyase</keyword>
<keyword id="KW-1185">Reference proteome</keyword>
<accession>P0DOB3</accession>
<accession>Q0CCX7</accession>
<proteinExistence type="inferred from homology"/>
<comment type="function">
    <text evidence="3 4 5 6 7 8 9">Decarboxylase; part of the gene cluster that mediates the biosynthesis of geodin, an intermediate in the biosynthesis of other natural products (PubMed:19549600, PubMed:24009710, PubMed:7665560). The pathway begins with the synthesis of atrochrysone thioester by the polyketide synthase (PKS) gedC (PubMed:12536215, PubMed:19549600). The atrochrysone carboxyl ACP thioesterase gedB then breaks the thioester bond and releases the atrochrysone carboxylic acid from gedC (PubMed:19549600). The atrochrysone carboxylic acid is then converted to atrochrysone which is further transformed into emodin anthrone (PubMed:24009710). The next step is performed by the emodinanthrone oxygenase gedH that catalyzes the oxidation of emodinanthrone to emodin (PubMed:1810248). Emodin O-methyltransferase encoded probably by gedA then catalyzes methylation of the 8-hydroxy group of emodin to form questin (PubMed:1444712). Questin oxidase is then involved in the ring cleavage of questin to form desmethylsulochrin via several intermediates including questin epoxide (PubMed:3182756). Another methylation step probably catalyzed by one of the methyltransferases identified in the cluster leads to the formation of sulochrin which is further converted to dihydrogeodin by the sulochrin halogenase gedL (PubMed:24009710). Finally, the dihydrogeodin oxidase gedJ catalyzes the stereospecific phenol oxidative coupling reaction converting dihydrogeodin to geodin (PubMed:7665560).</text>
</comment>
<comment type="catalytic activity">
    <reaction evidence="12">
        <text>atrochrysone carboxylate + H(+) = atrochrysone + CO2</text>
        <dbReference type="Rhea" id="RHEA:64264"/>
        <dbReference type="ChEBI" id="CHEBI:15378"/>
        <dbReference type="ChEBI" id="CHEBI:16526"/>
        <dbReference type="ChEBI" id="CHEBI:149713"/>
        <dbReference type="ChEBI" id="CHEBI:150016"/>
    </reaction>
    <physiologicalReaction direction="left-to-right" evidence="12">
        <dbReference type="Rhea" id="RHEA:64265"/>
    </physiologicalReaction>
</comment>
<comment type="pathway">
    <text evidence="7">Secondary metabolite biosynthesis.</text>
</comment>
<comment type="similarity">
    <text evidence="11">Belongs to the tpcK family.</text>
</comment>
<comment type="sequence caution" evidence="12">
    <conflict type="erroneous gene model prediction">
        <sequence resource="EMBL-CDS" id="EAU31630"/>
    </conflict>
    <text>The predicted gene ATEG_08457 has been split into 2 genes: ATEG_08457-1 and ATEG_08457-2.</text>
</comment>
<gene>
    <name evidence="10" type="primary">gedI</name>
    <name evidence="10" type="ORF">ATEG_08457-1</name>
</gene>
<sequence length="313" mass="35205">MKLEQCIVGRDHTDPRKWHHGDGRDGREHRTAPGLVGGSLAGRDPPVERARGDGDGGHEFMSVVVEGGELREQLLGLRIGIEEDRHRDERQAHHRPYRRSTRCTAGSLYIGDFIAGRTTVVGAIGAGPPSQRRFAFPEVNDCGPSSNIFAKCCAPGTILFGNIFDLPNFPRMSDVRAGSNDPPGKYLCLTICGYRKPGMSEEDYRHHMTKISAPMTKDLMVKYGIKRWTMIHSPAVTRTLMDQLYDSQMVNLADFDCFSQVVFKSVEDYKRMKEDPYYKEHLFKDHEHFADTKKSLFVHFMPLPPPLGPCPGS</sequence>
<feature type="chain" id="PRO_0000437110" description="Decarboxylase gedI">
    <location>
        <begin position="1"/>
        <end position="313"/>
    </location>
</feature>
<feature type="domain" description="EthD" evidence="1">
    <location>
        <begin position="197"/>
        <end position="292"/>
    </location>
</feature>
<feature type="region of interest" description="Disordered" evidence="2">
    <location>
        <begin position="1"/>
        <end position="56"/>
    </location>
</feature>
<feature type="compositionally biased region" description="Basic and acidic residues" evidence="2">
    <location>
        <begin position="1"/>
        <end position="31"/>
    </location>
</feature>
<feature type="compositionally biased region" description="Basic and acidic residues" evidence="2">
    <location>
        <begin position="45"/>
        <end position="56"/>
    </location>
</feature>
<dbReference type="EC" id="4.1.1.-" evidence="12"/>
<dbReference type="EMBL" id="CH476605">
    <property type="protein sequence ID" value="EAU31630.1"/>
    <property type="status" value="ALT_SEQ"/>
    <property type="molecule type" value="Genomic_DNA"/>
</dbReference>
<dbReference type="RefSeq" id="XP_001217596.1">
    <property type="nucleotide sequence ID" value="XM_001217595.1"/>
</dbReference>
<dbReference type="SMR" id="P0DOB3"/>
<dbReference type="STRING" id="341663.P0DOB3"/>
<dbReference type="EnsemblFungi" id="EAU31630">
    <property type="protein sequence ID" value="EAU31630"/>
    <property type="gene ID" value="ATEG_08457"/>
</dbReference>
<dbReference type="VEuPathDB" id="FungiDB:ATEG_08457"/>
<dbReference type="eggNOG" id="ENOG502SJ0E">
    <property type="taxonomic scope" value="Eukaryota"/>
</dbReference>
<dbReference type="OrthoDB" id="3454835at2759"/>
<dbReference type="Proteomes" id="UP000007963">
    <property type="component" value="Unassembled WGS sequence"/>
</dbReference>
<dbReference type="GO" id="GO:0016829">
    <property type="term" value="F:lyase activity"/>
    <property type="evidence" value="ECO:0007669"/>
    <property type="project" value="UniProtKB-KW"/>
</dbReference>
<dbReference type="GO" id="GO:0016491">
    <property type="term" value="F:oxidoreductase activity"/>
    <property type="evidence" value="ECO:0007669"/>
    <property type="project" value="InterPro"/>
</dbReference>
<dbReference type="Gene3D" id="3.30.70.100">
    <property type="match status" value="1"/>
</dbReference>
<dbReference type="InterPro" id="IPR011008">
    <property type="entry name" value="Dimeric_a/b-barrel"/>
</dbReference>
<dbReference type="InterPro" id="IPR009799">
    <property type="entry name" value="EthD_dom"/>
</dbReference>
<dbReference type="Pfam" id="PF07110">
    <property type="entry name" value="EthD"/>
    <property type="match status" value="1"/>
</dbReference>
<dbReference type="SUPFAM" id="SSF54909">
    <property type="entry name" value="Dimeric alpha+beta barrel"/>
    <property type="match status" value="1"/>
</dbReference>
<organism>
    <name type="scientific">Aspergillus terreus (strain NIH 2624 / FGSC A1156)</name>
    <dbReference type="NCBI Taxonomy" id="341663"/>
    <lineage>
        <taxon>Eukaryota</taxon>
        <taxon>Fungi</taxon>
        <taxon>Dikarya</taxon>
        <taxon>Ascomycota</taxon>
        <taxon>Pezizomycotina</taxon>
        <taxon>Eurotiomycetes</taxon>
        <taxon>Eurotiomycetidae</taxon>
        <taxon>Eurotiales</taxon>
        <taxon>Aspergillaceae</taxon>
        <taxon>Aspergillus</taxon>
        <taxon>Aspergillus subgen. Circumdati</taxon>
    </lineage>
</organism>